<organism>
    <name type="scientific">Anas platyrhynchos</name>
    <name type="common">Mallard</name>
    <name type="synonym">Anas boschas</name>
    <dbReference type="NCBI Taxonomy" id="8839"/>
    <lineage>
        <taxon>Eukaryota</taxon>
        <taxon>Metazoa</taxon>
        <taxon>Chordata</taxon>
        <taxon>Craniata</taxon>
        <taxon>Vertebrata</taxon>
        <taxon>Euteleostomi</taxon>
        <taxon>Archelosauria</taxon>
        <taxon>Archosauria</taxon>
        <taxon>Dinosauria</taxon>
        <taxon>Saurischia</taxon>
        <taxon>Theropoda</taxon>
        <taxon>Coelurosauria</taxon>
        <taxon>Aves</taxon>
        <taxon>Neognathae</taxon>
        <taxon>Galloanserae</taxon>
        <taxon>Anseriformes</taxon>
        <taxon>Anatidae</taxon>
        <taxon>Anatinae</taxon>
        <taxon>Anas</taxon>
    </lineage>
</organism>
<feature type="initiator methionine" description="Removed">
    <location>
        <position position="1"/>
    </location>
</feature>
<feature type="chain" id="PRO_0000168465" description="L-lactate dehydrogenase B chain">
    <location>
        <begin position="2"/>
        <end position="333"/>
    </location>
</feature>
<feature type="active site" description="Proton acceptor" evidence="1">
    <location>
        <position position="193"/>
    </location>
</feature>
<feature type="binding site" evidence="1">
    <location>
        <begin position="29"/>
        <end position="57"/>
    </location>
    <ligand>
        <name>NAD(+)</name>
        <dbReference type="ChEBI" id="CHEBI:57540"/>
    </ligand>
</feature>
<feature type="binding site" evidence="1">
    <location>
        <position position="99"/>
    </location>
    <ligand>
        <name>NAD(+)</name>
        <dbReference type="ChEBI" id="CHEBI:57540"/>
    </ligand>
</feature>
<feature type="binding site" evidence="1">
    <location>
        <position position="106"/>
    </location>
    <ligand>
        <name>substrate</name>
    </ligand>
</feature>
<feature type="binding site" evidence="1">
    <location>
        <position position="138"/>
    </location>
    <ligand>
        <name>NAD(+)</name>
        <dbReference type="ChEBI" id="CHEBI:57540"/>
    </ligand>
</feature>
<feature type="binding site" evidence="1">
    <location>
        <position position="138"/>
    </location>
    <ligand>
        <name>substrate</name>
    </ligand>
</feature>
<feature type="binding site" evidence="1">
    <location>
        <position position="169"/>
    </location>
    <ligand>
        <name>substrate</name>
    </ligand>
</feature>
<feature type="binding site" evidence="1">
    <location>
        <position position="248"/>
    </location>
    <ligand>
        <name>substrate</name>
    </ligand>
</feature>
<reference key="1">
    <citation type="journal article" date="1988" name="Proc. Natl. Acad. Sci. U.S.A.">
        <title>Duck lens epsilon-crystallin and lactate dehydrogenase B4 are identical: a single-copy gene product with two distinct functions.</title>
        <authorList>
            <person name="Hendriks W."/>
            <person name="Mulders J.W.M."/>
            <person name="Bibby M.A."/>
            <person name="Slingsby C."/>
            <person name="Bloemendal H."/>
            <person name="de Jong W.W."/>
        </authorList>
    </citation>
    <scope>NUCLEOTIDE SEQUENCE [MRNA]</scope>
</reference>
<reference key="2">
    <citation type="journal article" date="1985" name="Eur. J. Biochem.">
        <title>Epsilon-crystallin, a novel avian and reptilian eye lens protein.</title>
        <authorList>
            <person name="Stapel S.O."/>
            <person name="Zweers A."/>
            <person name="Dodemont H.J."/>
            <person name="Kan J.H."/>
            <person name="de Jong W.W."/>
        </authorList>
    </citation>
    <scope>PROTEIN SEQUENCE OF 91-112; 119-126; 149-155; 233-243 AND 308-328</scope>
</reference>
<reference key="3">
    <citation type="journal article" date="1987" name="Nature">
        <title>The enzyme lactate dehydrogenase as a structural protein in avian and crocodilian lenses.</title>
        <authorList>
            <person name="Wistow G.J."/>
            <person name="Mulders J.W.M."/>
            <person name="de Jong W.W."/>
        </authorList>
    </citation>
    <scope>EQUIVALENCE OF EPSILON CRYSTALLIN WITH LDH-B</scope>
</reference>
<keyword id="KW-0963">Cytoplasm</keyword>
<keyword id="KW-0903">Direct protein sequencing</keyword>
<keyword id="KW-0273">Eye lens protein</keyword>
<keyword id="KW-0520">NAD</keyword>
<keyword id="KW-0560">Oxidoreductase</keyword>
<name>LDHB_ANAPL</name>
<accession>P13743</accession>
<evidence type="ECO:0000250" key="1"/>
<evidence type="ECO:0000250" key="2">
    <source>
        <dbReference type="UniProtKB" id="P07195"/>
    </source>
</evidence>
<evidence type="ECO:0000305" key="3"/>
<comment type="function">
    <text evidence="2">Interconverts simultaneously and stereospecifically pyruvate and lactate with concomitant interconversion of NADH and NAD(+).</text>
</comment>
<comment type="catalytic activity">
    <reaction evidence="2">
        <text>(S)-lactate + NAD(+) = pyruvate + NADH + H(+)</text>
        <dbReference type="Rhea" id="RHEA:23444"/>
        <dbReference type="ChEBI" id="CHEBI:15361"/>
        <dbReference type="ChEBI" id="CHEBI:15378"/>
        <dbReference type="ChEBI" id="CHEBI:16651"/>
        <dbReference type="ChEBI" id="CHEBI:57540"/>
        <dbReference type="ChEBI" id="CHEBI:57945"/>
        <dbReference type="EC" id="1.1.1.27"/>
    </reaction>
    <physiologicalReaction direction="left-to-right" evidence="2">
        <dbReference type="Rhea" id="RHEA:23445"/>
    </physiologicalReaction>
    <physiologicalReaction direction="right-to-left" evidence="2">
        <dbReference type="Rhea" id="RHEA:23446"/>
    </physiologicalReaction>
</comment>
<comment type="pathway">
    <text evidence="2">Fermentation; pyruvate fermentation to lactate; (S)-lactate from pyruvate: step 1/1.</text>
</comment>
<comment type="subunit">
    <text>Homotetramer.</text>
</comment>
<comment type="subcellular location">
    <subcellularLocation>
        <location evidence="1">Cytoplasm</location>
    </subcellularLocation>
</comment>
<comment type="similarity">
    <text evidence="3">Belongs to the LDH/MDH superfamily. LDH family.</text>
</comment>
<dbReference type="EC" id="1.1.1.27" evidence="2"/>
<dbReference type="EMBL" id="J03869">
    <property type="protein sequence ID" value="AAA49221.1"/>
    <property type="molecule type" value="mRNA"/>
</dbReference>
<dbReference type="PIR" id="A21986">
    <property type="entry name" value="A21986"/>
</dbReference>
<dbReference type="PIR" id="A40488">
    <property type="entry name" value="A40488"/>
</dbReference>
<dbReference type="RefSeq" id="XP_027305798.1">
    <property type="nucleotide sequence ID" value="XM_027449997.3"/>
</dbReference>
<dbReference type="SMR" id="P13743"/>
<dbReference type="MoonProt" id="P13743"/>
<dbReference type="GeneID" id="101801152"/>
<dbReference type="OrthoDB" id="5405561at2759"/>
<dbReference type="SABIO-RK" id="P13743"/>
<dbReference type="UniPathway" id="UPA00554">
    <property type="reaction ID" value="UER00611"/>
</dbReference>
<dbReference type="Proteomes" id="UP000694400">
    <property type="component" value="Unplaced"/>
</dbReference>
<dbReference type="GO" id="GO:0005737">
    <property type="term" value="C:cytoplasm"/>
    <property type="evidence" value="ECO:0007669"/>
    <property type="project" value="UniProtKB-SubCell"/>
</dbReference>
<dbReference type="GO" id="GO:0004459">
    <property type="term" value="F:L-lactate dehydrogenase activity"/>
    <property type="evidence" value="ECO:0007669"/>
    <property type="project" value="UniProtKB-EC"/>
</dbReference>
<dbReference type="GO" id="GO:0005212">
    <property type="term" value="F:structural constituent of eye lens"/>
    <property type="evidence" value="ECO:0007669"/>
    <property type="project" value="UniProtKB-KW"/>
</dbReference>
<dbReference type="GO" id="GO:0006089">
    <property type="term" value="P:lactate metabolic process"/>
    <property type="evidence" value="ECO:0007669"/>
    <property type="project" value="TreeGrafter"/>
</dbReference>
<dbReference type="CDD" id="cd05293">
    <property type="entry name" value="LDH_1"/>
    <property type="match status" value="1"/>
</dbReference>
<dbReference type="FunFam" id="3.40.50.720:FF:000029">
    <property type="entry name" value="L-lactate dehydrogenase A chain"/>
    <property type="match status" value="1"/>
</dbReference>
<dbReference type="FunFam" id="3.90.110.10:FF:000003">
    <property type="entry name" value="L-lactate dehydrogenase A chain"/>
    <property type="match status" value="1"/>
</dbReference>
<dbReference type="Gene3D" id="3.90.110.10">
    <property type="entry name" value="Lactate dehydrogenase/glycoside hydrolase, family 4, C-terminal"/>
    <property type="match status" value="1"/>
</dbReference>
<dbReference type="Gene3D" id="3.40.50.720">
    <property type="entry name" value="NAD(P)-binding Rossmann-like Domain"/>
    <property type="match status" value="1"/>
</dbReference>
<dbReference type="HAMAP" id="MF_00488">
    <property type="entry name" value="Lactate_dehydrog"/>
    <property type="match status" value="1"/>
</dbReference>
<dbReference type="InterPro" id="IPR001557">
    <property type="entry name" value="L-lactate/malate_DH"/>
</dbReference>
<dbReference type="InterPro" id="IPR011304">
    <property type="entry name" value="L-lactate_DH"/>
</dbReference>
<dbReference type="InterPro" id="IPR018177">
    <property type="entry name" value="L-lactate_DH_AS"/>
</dbReference>
<dbReference type="InterPro" id="IPR022383">
    <property type="entry name" value="Lactate/malate_DH_C"/>
</dbReference>
<dbReference type="InterPro" id="IPR001236">
    <property type="entry name" value="Lactate/malate_DH_N"/>
</dbReference>
<dbReference type="InterPro" id="IPR015955">
    <property type="entry name" value="Lactate_DH/Glyco_Ohase_4_C"/>
</dbReference>
<dbReference type="InterPro" id="IPR036291">
    <property type="entry name" value="NAD(P)-bd_dom_sf"/>
</dbReference>
<dbReference type="NCBIfam" id="TIGR01771">
    <property type="entry name" value="L-LDH-NAD"/>
    <property type="match status" value="1"/>
</dbReference>
<dbReference type="PANTHER" id="PTHR43128">
    <property type="entry name" value="L-2-HYDROXYCARBOXYLATE DEHYDROGENASE (NAD(P)(+))"/>
    <property type="match status" value="1"/>
</dbReference>
<dbReference type="PANTHER" id="PTHR43128:SF2">
    <property type="entry name" value="L-LACTATE DEHYDROGENASE B CHAIN"/>
    <property type="match status" value="1"/>
</dbReference>
<dbReference type="Pfam" id="PF02866">
    <property type="entry name" value="Ldh_1_C"/>
    <property type="match status" value="1"/>
</dbReference>
<dbReference type="Pfam" id="PF00056">
    <property type="entry name" value="Ldh_1_N"/>
    <property type="match status" value="1"/>
</dbReference>
<dbReference type="PIRSF" id="PIRSF000102">
    <property type="entry name" value="Lac_mal_DH"/>
    <property type="match status" value="1"/>
</dbReference>
<dbReference type="PRINTS" id="PR00086">
    <property type="entry name" value="LLDHDRGNASE"/>
</dbReference>
<dbReference type="SUPFAM" id="SSF56327">
    <property type="entry name" value="LDH C-terminal domain-like"/>
    <property type="match status" value="1"/>
</dbReference>
<dbReference type="SUPFAM" id="SSF51735">
    <property type="entry name" value="NAD(P)-binding Rossmann-fold domains"/>
    <property type="match status" value="1"/>
</dbReference>
<dbReference type="PROSITE" id="PS00064">
    <property type="entry name" value="L_LDH"/>
    <property type="match status" value="1"/>
</dbReference>
<sequence>MATLKEKLMTPVAAASAVPSSKITVVGVGQVGMACAVSILGKGLCDELALVDVLEDKLKGEMMDLQHGSLFLQTHKIVADKDYAVTANSKIVVVTAGVRQQEGESRLNLVQRNVGVFKGIIPQIVKYSPNCTILVVSNPVDILTYVTWKLSGLPKHRVIGSGCNLDTARFRYLMAERLGIHPTSCHGWILGEHGDSSVAVWSGVNVAGVSLQELNPAMGTDKDSENWKEVHKQVVESAYEVIRLKGYTNWAIGLSVAELCETMLKNLCRVHSVSTLVKGTYGIENDVFLSLPCVLSASGLTSVINQKLKDDEVAQLKKSADTLWSIQKDLKDM</sequence>
<proteinExistence type="evidence at protein level"/>
<protein>
    <recommendedName>
        <fullName>L-lactate dehydrogenase B chain</fullName>
        <shortName>LDH-B</shortName>
        <ecNumber evidence="2">1.1.1.27</ecNumber>
    </recommendedName>
    <alternativeName>
        <fullName>Epsilon-crystallin</fullName>
    </alternativeName>
</protein>
<gene>
    <name type="primary">LDHB</name>
</gene>